<evidence type="ECO:0000250" key="1">
    <source>
        <dbReference type="UniProtKB" id="P36161"/>
    </source>
</evidence>
<evidence type="ECO:0000256" key="2">
    <source>
        <dbReference type="SAM" id="MobiDB-lite"/>
    </source>
</evidence>
<evidence type="ECO:0000303" key="3">
    <source>
    </source>
</evidence>
<evidence type="ECO:0000305" key="4"/>
<evidence type="ECO:0000305" key="5">
    <source>
    </source>
</evidence>
<accession>G0S9A7</accession>
<accession>G3EQ74</accession>
<feature type="chain" id="PRO_0000433187" description="Nucleoporin NUP133">
    <location>
        <begin position="1"/>
        <end position="1364"/>
    </location>
</feature>
<feature type="region of interest" description="Disordered" evidence="2">
    <location>
        <begin position="1"/>
        <end position="114"/>
    </location>
</feature>
<feature type="region of interest" description="Disordered" evidence="2">
    <location>
        <begin position="531"/>
        <end position="554"/>
    </location>
</feature>
<feature type="compositionally biased region" description="Basic and acidic residues" evidence="2">
    <location>
        <begin position="1"/>
        <end position="11"/>
    </location>
</feature>
<feature type="compositionally biased region" description="Low complexity" evidence="2">
    <location>
        <begin position="49"/>
        <end position="62"/>
    </location>
</feature>
<feature type="compositionally biased region" description="Basic and acidic residues" evidence="2">
    <location>
        <begin position="65"/>
        <end position="81"/>
    </location>
</feature>
<feature type="compositionally biased region" description="Basic and acidic residues" evidence="2">
    <location>
        <begin position="90"/>
        <end position="110"/>
    </location>
</feature>
<feature type="sequence conflict" description="In Ref. 1; AEN86177." evidence="4" ref="1">
    <original>S</original>
    <variation>SKHSQFSTEWTDAECTG</variation>
    <location>
        <position position="141"/>
    </location>
</feature>
<dbReference type="EMBL" id="GL988043">
    <property type="protein sequence ID" value="EGS20018.1"/>
    <property type="molecule type" value="Genomic_DNA"/>
</dbReference>
<dbReference type="EMBL" id="JF276289">
    <property type="protein sequence ID" value="AEN86177.1"/>
    <property type="molecule type" value="Genomic_DNA"/>
</dbReference>
<dbReference type="RefSeq" id="XP_006694903.1">
    <property type="nucleotide sequence ID" value="XM_006694840.1"/>
</dbReference>
<dbReference type="SMR" id="G0S9A7"/>
<dbReference type="DIP" id="DIP-60573N"/>
<dbReference type="IntAct" id="G0S9A7">
    <property type="interactions" value="4"/>
</dbReference>
<dbReference type="STRING" id="759272.G0S9A7"/>
<dbReference type="TCDB" id="1.I.1.1.2">
    <property type="family name" value="the nuclear pore complex (npc) family"/>
</dbReference>
<dbReference type="GeneID" id="18258553"/>
<dbReference type="KEGG" id="cthr:CTHT_0045150"/>
<dbReference type="eggNOG" id="KOG4121">
    <property type="taxonomic scope" value="Eukaryota"/>
</dbReference>
<dbReference type="HOGENOM" id="CLU_002493_0_0_1"/>
<dbReference type="OMA" id="HVATLLW"/>
<dbReference type="OrthoDB" id="103454at2759"/>
<dbReference type="Proteomes" id="UP000008066">
    <property type="component" value="Unassembled WGS sequence"/>
</dbReference>
<dbReference type="GO" id="GO:0031965">
    <property type="term" value="C:nuclear membrane"/>
    <property type="evidence" value="ECO:0007669"/>
    <property type="project" value="UniProtKB-SubCell"/>
</dbReference>
<dbReference type="GO" id="GO:0031080">
    <property type="term" value="C:nuclear pore outer ring"/>
    <property type="evidence" value="ECO:0007669"/>
    <property type="project" value="TreeGrafter"/>
</dbReference>
<dbReference type="GO" id="GO:0017056">
    <property type="term" value="F:structural constituent of nuclear pore"/>
    <property type="evidence" value="ECO:0007669"/>
    <property type="project" value="InterPro"/>
</dbReference>
<dbReference type="GO" id="GO:0016973">
    <property type="term" value="P:poly(A)+ mRNA export from nucleus"/>
    <property type="evidence" value="ECO:0007669"/>
    <property type="project" value="TreeGrafter"/>
</dbReference>
<dbReference type="GO" id="GO:0006606">
    <property type="term" value="P:protein import into nucleus"/>
    <property type="evidence" value="ECO:0007669"/>
    <property type="project" value="TreeGrafter"/>
</dbReference>
<dbReference type="GO" id="GO:0000972">
    <property type="term" value="P:transcription-dependent tethering of RNA polymerase II gene DNA at nuclear periphery"/>
    <property type="evidence" value="ECO:0007669"/>
    <property type="project" value="TreeGrafter"/>
</dbReference>
<dbReference type="FunFam" id="2.130.10.10:FF:001057">
    <property type="entry name" value="Nuclear pore complex subunit Nup133, putative"/>
    <property type="match status" value="1"/>
</dbReference>
<dbReference type="Gene3D" id="1.20.58.1380">
    <property type="match status" value="1"/>
</dbReference>
<dbReference type="Gene3D" id="1.25.40.700">
    <property type="match status" value="1"/>
</dbReference>
<dbReference type="Gene3D" id="2.130.10.10">
    <property type="entry name" value="YVTN repeat-like/Quinoprotein amine dehydrogenase"/>
    <property type="match status" value="1"/>
</dbReference>
<dbReference type="InterPro" id="IPR007187">
    <property type="entry name" value="Nucleoporin_Nup133/Nup155_C"/>
</dbReference>
<dbReference type="InterPro" id="IPR014908">
    <property type="entry name" value="Nucleoporin_Nup133/Nup155_N"/>
</dbReference>
<dbReference type="InterPro" id="IPR037624">
    <property type="entry name" value="Nup133-like"/>
</dbReference>
<dbReference type="InterPro" id="IPR015943">
    <property type="entry name" value="WD40/YVTN_repeat-like_dom_sf"/>
</dbReference>
<dbReference type="PANTHER" id="PTHR13405">
    <property type="entry name" value="NUCLEAR PORE COMPLEX PROTEIN NUP133"/>
    <property type="match status" value="1"/>
</dbReference>
<dbReference type="PANTHER" id="PTHR13405:SF11">
    <property type="entry name" value="NUCLEAR PORE COMPLEX PROTEIN NUP133"/>
    <property type="match status" value="1"/>
</dbReference>
<dbReference type="Pfam" id="PF03177">
    <property type="entry name" value="Nucleoporin_C"/>
    <property type="match status" value="1"/>
</dbReference>
<dbReference type="Pfam" id="PF08801">
    <property type="entry name" value="Nucleoporin_N"/>
    <property type="match status" value="1"/>
</dbReference>
<dbReference type="SUPFAM" id="SSF117289">
    <property type="entry name" value="Nucleoporin domain"/>
    <property type="match status" value="1"/>
</dbReference>
<protein>
    <recommendedName>
        <fullName evidence="3">Nucleoporin NUP133</fullName>
    </recommendedName>
    <alternativeName>
        <fullName>Nuclear pore protein NUP133</fullName>
    </alternativeName>
</protein>
<proteinExistence type="inferred from homology"/>
<comment type="function">
    <text evidence="1">Functions as a component of the nuclear pore complex (NPC). NPC components, collectively referred to as nucleoporins (NUPs), can play the role of both NPC structural components and of docking or interaction partners for transiently associated nuclear transport factors. NUP133 is involved in nuclear poly(A)+ RNA, tRNA and pre-ribosome export, in GSP1 nuclear import, in NPC assembly and distribution, as well as in nuclear envelope organization.</text>
</comment>
<comment type="subunit">
    <text evidence="1 5">Component of the nuclear pore complex (NPC). NPC constitutes the exclusive means of nucleocytoplasmic transport. NPCs allow the passive diffusion of ions and small molecules and the active, nuclear transport receptor-mediated bidirectional transport of macromolecules such as proteins, RNAs, ribonucleoparticles (RNPs), and ribosomal subunits across the nuclear envelope. Due to its 8-fold rotational symmetry, all subunits are present with 8 copies or multiples thereof.</text>
</comment>
<comment type="subcellular location">
    <subcellularLocation>
        <location evidence="1">Nucleus</location>
        <location evidence="1">Nuclear pore complex</location>
    </subcellularLocation>
    <subcellularLocation>
        <location evidence="1">Nucleus membrane</location>
        <topology evidence="1">Peripheral membrane protein</topology>
        <orientation evidence="1">Cytoplasmic side</orientation>
    </subcellularLocation>
    <subcellularLocation>
        <location evidence="1">Nucleus membrane</location>
        <topology evidence="1">Peripheral membrane protein</topology>
        <orientation evidence="1">Nucleoplasmic side</orientation>
    </subcellularLocation>
    <text evidence="1">Symmetric distribution.</text>
</comment>
<comment type="similarity">
    <text evidence="4">Belongs to the nucleoporin Nup133 family.</text>
</comment>
<organism>
    <name type="scientific">Chaetomium thermophilum (strain DSM 1495 / CBS 144.50 / IMI 039719)</name>
    <name type="common">Thermochaetoides thermophila</name>
    <dbReference type="NCBI Taxonomy" id="759272"/>
    <lineage>
        <taxon>Eukaryota</taxon>
        <taxon>Fungi</taxon>
        <taxon>Dikarya</taxon>
        <taxon>Ascomycota</taxon>
        <taxon>Pezizomycotina</taxon>
        <taxon>Sordariomycetes</taxon>
        <taxon>Sordariomycetidae</taxon>
        <taxon>Sordariales</taxon>
        <taxon>Chaetomiaceae</taxon>
        <taxon>Thermochaetoides</taxon>
    </lineage>
</organism>
<name>NU133_CHATD</name>
<keyword id="KW-0472">Membrane</keyword>
<keyword id="KW-0509">mRNA transport</keyword>
<keyword id="KW-0906">Nuclear pore complex</keyword>
<keyword id="KW-0539">Nucleus</keyword>
<keyword id="KW-0653">Protein transport</keyword>
<keyword id="KW-1185">Reference proteome</keyword>
<keyword id="KW-0811">Translocation</keyword>
<keyword id="KW-0813">Transport</keyword>
<gene>
    <name type="primary">NUP133</name>
    <name type="ORF">CTHT_0045150</name>
</gene>
<sequence length="1364" mass="150745">MFSSTLHEDGPATRTRSSRRRQRPVASDSSLQTQPKAKRQRVPLTESNTAPTPTPADADAPPEMFEVKPDPVLAKRERDGIGIENIENLGPRRELSLRSKKPKSGERTSKGDGSIILTTNNAFTVSKLPALPDRLRAEPTSRQHGAIFSSGYALALTHTHAFVWPYTATTASPETFTFALPYPSKHASDPLPLGALVPPSASSDDPGLVVVMPVSGRVVYWESISSAATLDFIRQQRTGIEDAISGMYSSEHITQLVSAESAGFVLVFSSGRIAYMSVRDPHGRPGITVQYLRSPFGGASLGFLSTLRHALSGSSRGDIAAAHANHGPRVGERVVIAASSKGRLQAWKIHRGGHHEPVAEADVRERLVEAVNEADAKTQAFPSESFEVLDFAFVPRGLEPKYVNASRLSEALTHEEDSLQHMLLLVGFSRGHQARYSLVETVLAPEGARIGTVRPITSYTSPVRPGALEKPRLYLPRPALVAFVVFDRAVVVASMVAPPDSPDSQLQEDSHILPPTFEDVVDFRDDDTLQVVGSGSEEPGAGTSSEDVRPHRHKTKNPTAVLLLPGVGIVRVAITDIERFASDAPPRVTAKSKLEQAVFFGIKSDNPLVFQGRRALPFSDREVCDAAVELSHEIVNSKTPFIPSVPASLEGNMKSRSAYLDALITFLNACKVNMDERTRWMLLYDAEKMAVATWIWQKHEQFLAERPRADKKTLISEAAVFINENQKTELNVAAGQVDPVRHWFIHDIFRLDIFVAWAYQIIKYHYTQKLSDEPGLNRLVWEAVTINNGALLEARQFRLDKAAQYGVDPAVVPTGNGLPEPWTSTYFITNNLKRLTEFCHQWLAKHDAQPSADPRFDARLLDTVRERLPSLTSQYFTSLSEYITWAASSTDPETQDRCRAYQAAYAEDVYKKIVKLKEFDLWEEAVELAREFEAFDALADVVVGQILMLEAAAADPTTTESKAQENAALAQVKKQRLGRLMEEFGEGFASRAYEVLLDAAGVQAVLEFAFDRKGFITKWLRGKPELARISWVNEVLREGDVGGAAETLLGLGMSREVQVWNKKVELSLGKLALLAEGGGSDDEAGKGEVGGTIKKIDAELEVVKVQDLLYQWILASVHEAVDSSAEVELAVKQFGGLIPRRQKALLQIFEDGIARLLKHEVLDPLTLIDLLTLSSLGPGHYEGMGDQFFLALKVAHYAALENAEEVRRLIWRRCLVRDDWRQVNETNLKGDEEALEAVGETAAYRTLFACFDEESSTPTFRPHHTLKPSDCLGVYTEPEQLDSRFAAMDDSFRGKLVEAMRAEDRLLRGFVEKAQLDEWWRATRETAERMVGVAAQKGHRRVNSGSVGNGGVNGLSLNGRVKMY</sequence>
<reference key="1">
    <citation type="journal article" date="2011" name="Cell">
        <title>Insight into structure and assembly of the nuclear pore complex by utilizing the genome of a eukaryotic thermophile.</title>
        <authorList>
            <person name="Amlacher S."/>
            <person name="Sarges P."/>
            <person name="Flemming D."/>
            <person name="van Noort V."/>
            <person name="Kunze R."/>
            <person name="Devos D.P."/>
            <person name="Arumugam M."/>
            <person name="Bork P."/>
            <person name="Hurt E."/>
        </authorList>
    </citation>
    <scope>NUCLEOTIDE SEQUENCE [LARGE SCALE GENOMIC DNA]</scope>
    <source>
        <strain>DSM 1495 / CBS 144.50 / IMI 039719</strain>
    </source>
</reference>